<gene>
    <name type="primary">flgI</name>
    <name type="ordered locus">SF1084</name>
    <name type="ordered locus">S1164</name>
</gene>
<name>FLGI_SHIFL</name>
<sequence>MIKFLSALILLLVTTAAQAERIRDLTSVQGVRQNSLIGYGLVVGLDGTGDQTTQTPFTTQTLNNMLSQLGITVPTGTNMQLKNVAAVMVTASLPPFGRQGQTIDVVVSSMGNAKSLRGGTLLMTPLKGVDSQVYALAQGNILVGGAGASAGGSSVQVNQLNGGRITNGAVIERELPSQFGVGNTLNLQLNDEDFSMAQQIADTINRVRGYGSATALDARTIQVRVPSGNSSQVRFLADIQNMQVNVTPQDAKVVINSRTGSVVMNREVTLDSCAVAQGNLSVTVNRQANVSQPDTPFGGGQTVVTPQTQIDLRQSGGSLQSVRSSASLNNVVRALNALGATPMDLMSILQSMQSAGCLRAKLEII</sequence>
<organism>
    <name type="scientific">Shigella flexneri</name>
    <dbReference type="NCBI Taxonomy" id="623"/>
    <lineage>
        <taxon>Bacteria</taxon>
        <taxon>Pseudomonadati</taxon>
        <taxon>Pseudomonadota</taxon>
        <taxon>Gammaproteobacteria</taxon>
        <taxon>Enterobacterales</taxon>
        <taxon>Enterobacteriaceae</taxon>
        <taxon>Shigella</taxon>
    </lineage>
</organism>
<protein>
    <recommendedName>
        <fullName>Flagellar P-ring protein</fullName>
    </recommendedName>
    <alternativeName>
        <fullName>Basal body P-ring protein</fullName>
    </alternativeName>
</protein>
<comment type="function">
    <text evidence="1">Assembles around the rod to form the L-ring and probably protects the motor/basal body from shearing forces during rotation.</text>
</comment>
<comment type="subunit">
    <text evidence="1">The basal body constitutes a major portion of the flagellar organelle and consists of four rings (L,P,S, and M) mounted on a central rod.</text>
</comment>
<comment type="subcellular location">
    <subcellularLocation>
        <location evidence="1">Periplasm</location>
    </subcellularLocation>
    <subcellularLocation>
        <location evidence="1">Bacterial flagellum basal body</location>
    </subcellularLocation>
</comment>
<comment type="similarity">
    <text evidence="2">Belongs to the FlgI family.</text>
</comment>
<feature type="signal peptide" evidence="1">
    <location>
        <begin position="1"/>
        <end position="19"/>
    </location>
</feature>
<feature type="chain" id="PRO_0000009523" description="Flagellar P-ring protein">
    <location>
        <begin position="20"/>
        <end position="365"/>
    </location>
</feature>
<accession>P0A6S4</accession>
<accession>P75941</accession>
<dbReference type="EMBL" id="AE005674">
    <property type="protein sequence ID" value="AAN42705.2"/>
    <property type="molecule type" value="Genomic_DNA"/>
</dbReference>
<dbReference type="EMBL" id="AE014073">
    <property type="protein sequence ID" value="AAP16593.1"/>
    <property type="molecule type" value="Genomic_DNA"/>
</dbReference>
<dbReference type="RefSeq" id="NP_706998.2">
    <property type="nucleotide sequence ID" value="NC_004337.2"/>
</dbReference>
<dbReference type="RefSeq" id="WP_000589326.1">
    <property type="nucleotide sequence ID" value="NZ_WPGW01000001.1"/>
</dbReference>
<dbReference type="SMR" id="P0A6S4"/>
<dbReference type="STRING" id="198214.SF1084"/>
<dbReference type="PaxDb" id="198214-SF1084"/>
<dbReference type="GeneID" id="1024045"/>
<dbReference type="GeneID" id="75203667"/>
<dbReference type="KEGG" id="sfl:SF1084"/>
<dbReference type="KEGG" id="sfx:S1164"/>
<dbReference type="PATRIC" id="fig|198214.7.peg.1271"/>
<dbReference type="HOGENOM" id="CLU_045235_1_0_6"/>
<dbReference type="Proteomes" id="UP000001006">
    <property type="component" value="Chromosome"/>
</dbReference>
<dbReference type="Proteomes" id="UP000002673">
    <property type="component" value="Chromosome"/>
</dbReference>
<dbReference type="GO" id="GO:0009428">
    <property type="term" value="C:bacterial-type flagellum basal body, distal rod, P ring"/>
    <property type="evidence" value="ECO:0007669"/>
    <property type="project" value="InterPro"/>
</dbReference>
<dbReference type="GO" id="GO:0030288">
    <property type="term" value="C:outer membrane-bounded periplasmic space"/>
    <property type="evidence" value="ECO:0007669"/>
    <property type="project" value="InterPro"/>
</dbReference>
<dbReference type="GO" id="GO:0005198">
    <property type="term" value="F:structural molecule activity"/>
    <property type="evidence" value="ECO:0007669"/>
    <property type="project" value="InterPro"/>
</dbReference>
<dbReference type="GO" id="GO:0071973">
    <property type="term" value="P:bacterial-type flagellum-dependent cell motility"/>
    <property type="evidence" value="ECO:0007669"/>
    <property type="project" value="InterPro"/>
</dbReference>
<dbReference type="HAMAP" id="MF_00416">
    <property type="entry name" value="FlgI"/>
    <property type="match status" value="1"/>
</dbReference>
<dbReference type="InterPro" id="IPR001782">
    <property type="entry name" value="Flag_FlgI"/>
</dbReference>
<dbReference type="NCBIfam" id="NF003676">
    <property type="entry name" value="PRK05303.1"/>
    <property type="match status" value="1"/>
</dbReference>
<dbReference type="PANTHER" id="PTHR30381">
    <property type="entry name" value="FLAGELLAR P-RING PERIPLASMIC PROTEIN FLGI"/>
    <property type="match status" value="1"/>
</dbReference>
<dbReference type="PANTHER" id="PTHR30381:SF0">
    <property type="entry name" value="FLAGELLAR P-RING PROTEIN"/>
    <property type="match status" value="1"/>
</dbReference>
<dbReference type="Pfam" id="PF02119">
    <property type="entry name" value="FlgI"/>
    <property type="match status" value="1"/>
</dbReference>
<dbReference type="PRINTS" id="PR01010">
    <property type="entry name" value="FLGPRINGFLGI"/>
</dbReference>
<evidence type="ECO:0000250" key="1"/>
<evidence type="ECO:0000305" key="2"/>
<keyword id="KW-0975">Bacterial flagellum</keyword>
<keyword id="KW-0574">Periplasm</keyword>
<keyword id="KW-1185">Reference proteome</keyword>
<keyword id="KW-0732">Signal</keyword>
<proteinExistence type="inferred from homology"/>
<reference key="1">
    <citation type="journal article" date="2002" name="Nucleic Acids Res.">
        <title>Genome sequence of Shigella flexneri 2a: insights into pathogenicity through comparison with genomes of Escherichia coli K12 and O157.</title>
        <authorList>
            <person name="Jin Q."/>
            <person name="Yuan Z."/>
            <person name="Xu J."/>
            <person name="Wang Y."/>
            <person name="Shen Y."/>
            <person name="Lu W."/>
            <person name="Wang J."/>
            <person name="Liu H."/>
            <person name="Yang J."/>
            <person name="Yang F."/>
            <person name="Zhang X."/>
            <person name="Zhang J."/>
            <person name="Yang G."/>
            <person name="Wu H."/>
            <person name="Qu D."/>
            <person name="Dong J."/>
            <person name="Sun L."/>
            <person name="Xue Y."/>
            <person name="Zhao A."/>
            <person name="Gao Y."/>
            <person name="Zhu J."/>
            <person name="Kan B."/>
            <person name="Ding K."/>
            <person name="Chen S."/>
            <person name="Cheng H."/>
            <person name="Yao Z."/>
            <person name="He B."/>
            <person name="Chen R."/>
            <person name="Ma D."/>
            <person name="Qiang B."/>
            <person name="Wen Y."/>
            <person name="Hou Y."/>
            <person name="Yu J."/>
        </authorList>
    </citation>
    <scope>NUCLEOTIDE SEQUENCE [LARGE SCALE GENOMIC DNA]</scope>
    <source>
        <strain>301 / Serotype 2a</strain>
    </source>
</reference>
<reference key="2">
    <citation type="journal article" date="2003" name="Infect. Immun.">
        <title>Complete genome sequence and comparative genomics of Shigella flexneri serotype 2a strain 2457T.</title>
        <authorList>
            <person name="Wei J."/>
            <person name="Goldberg M.B."/>
            <person name="Burland V."/>
            <person name="Venkatesan M.M."/>
            <person name="Deng W."/>
            <person name="Fournier G."/>
            <person name="Mayhew G.F."/>
            <person name="Plunkett G. III"/>
            <person name="Rose D.J."/>
            <person name="Darling A."/>
            <person name="Mau B."/>
            <person name="Perna N.T."/>
            <person name="Payne S.M."/>
            <person name="Runyen-Janecky L.J."/>
            <person name="Zhou S."/>
            <person name="Schwartz D.C."/>
            <person name="Blattner F.R."/>
        </authorList>
    </citation>
    <scope>NUCLEOTIDE SEQUENCE [LARGE SCALE GENOMIC DNA]</scope>
    <source>
        <strain>ATCC 700930 / 2457T / Serotype 2a</strain>
    </source>
</reference>